<organism>
    <name type="scientific">Paraburkholderia phytofirmans (strain DSM 17436 / LMG 22146 / PsJN)</name>
    <name type="common">Burkholderia phytofirmans</name>
    <dbReference type="NCBI Taxonomy" id="398527"/>
    <lineage>
        <taxon>Bacteria</taxon>
        <taxon>Pseudomonadati</taxon>
        <taxon>Pseudomonadota</taxon>
        <taxon>Betaproteobacteria</taxon>
        <taxon>Burkholderiales</taxon>
        <taxon>Burkholderiaceae</taxon>
        <taxon>Paraburkholderia</taxon>
    </lineage>
</organism>
<name>EFTS_PARPJ</name>
<dbReference type="EMBL" id="CP001052">
    <property type="protein sequence ID" value="ACD16850.1"/>
    <property type="molecule type" value="Genomic_DNA"/>
</dbReference>
<dbReference type="RefSeq" id="WP_012433447.1">
    <property type="nucleotide sequence ID" value="NC_010681.1"/>
</dbReference>
<dbReference type="SMR" id="B2T5J3"/>
<dbReference type="STRING" id="398527.Bphyt_2454"/>
<dbReference type="KEGG" id="bpy:Bphyt_2454"/>
<dbReference type="eggNOG" id="COG0264">
    <property type="taxonomic scope" value="Bacteria"/>
</dbReference>
<dbReference type="HOGENOM" id="CLU_047155_0_2_4"/>
<dbReference type="OrthoDB" id="9808348at2"/>
<dbReference type="Proteomes" id="UP000001739">
    <property type="component" value="Chromosome 1"/>
</dbReference>
<dbReference type="GO" id="GO:0005737">
    <property type="term" value="C:cytoplasm"/>
    <property type="evidence" value="ECO:0007669"/>
    <property type="project" value="UniProtKB-SubCell"/>
</dbReference>
<dbReference type="GO" id="GO:0003746">
    <property type="term" value="F:translation elongation factor activity"/>
    <property type="evidence" value="ECO:0007669"/>
    <property type="project" value="UniProtKB-UniRule"/>
</dbReference>
<dbReference type="CDD" id="cd14275">
    <property type="entry name" value="UBA_EF-Ts"/>
    <property type="match status" value="1"/>
</dbReference>
<dbReference type="FunFam" id="1.10.286.20:FF:000001">
    <property type="entry name" value="Elongation factor Ts"/>
    <property type="match status" value="1"/>
</dbReference>
<dbReference type="FunFam" id="1.10.8.10:FF:000001">
    <property type="entry name" value="Elongation factor Ts"/>
    <property type="match status" value="1"/>
</dbReference>
<dbReference type="Gene3D" id="1.10.286.20">
    <property type="match status" value="1"/>
</dbReference>
<dbReference type="Gene3D" id="1.10.8.10">
    <property type="entry name" value="DNA helicase RuvA subunit, C-terminal domain"/>
    <property type="match status" value="1"/>
</dbReference>
<dbReference type="Gene3D" id="3.30.479.20">
    <property type="entry name" value="Elongation factor Ts, dimerisation domain"/>
    <property type="match status" value="2"/>
</dbReference>
<dbReference type="HAMAP" id="MF_00050">
    <property type="entry name" value="EF_Ts"/>
    <property type="match status" value="1"/>
</dbReference>
<dbReference type="InterPro" id="IPR036402">
    <property type="entry name" value="EF-Ts_dimer_sf"/>
</dbReference>
<dbReference type="InterPro" id="IPR001816">
    <property type="entry name" value="Transl_elong_EFTs/EF1B"/>
</dbReference>
<dbReference type="InterPro" id="IPR014039">
    <property type="entry name" value="Transl_elong_EFTs/EF1B_dimer"/>
</dbReference>
<dbReference type="InterPro" id="IPR018101">
    <property type="entry name" value="Transl_elong_Ts_CS"/>
</dbReference>
<dbReference type="InterPro" id="IPR009060">
    <property type="entry name" value="UBA-like_sf"/>
</dbReference>
<dbReference type="NCBIfam" id="TIGR00116">
    <property type="entry name" value="tsf"/>
    <property type="match status" value="1"/>
</dbReference>
<dbReference type="PANTHER" id="PTHR11741">
    <property type="entry name" value="ELONGATION FACTOR TS"/>
    <property type="match status" value="1"/>
</dbReference>
<dbReference type="PANTHER" id="PTHR11741:SF0">
    <property type="entry name" value="ELONGATION FACTOR TS, MITOCHONDRIAL"/>
    <property type="match status" value="1"/>
</dbReference>
<dbReference type="Pfam" id="PF00889">
    <property type="entry name" value="EF_TS"/>
    <property type="match status" value="1"/>
</dbReference>
<dbReference type="SUPFAM" id="SSF54713">
    <property type="entry name" value="Elongation factor Ts (EF-Ts), dimerisation domain"/>
    <property type="match status" value="2"/>
</dbReference>
<dbReference type="SUPFAM" id="SSF46934">
    <property type="entry name" value="UBA-like"/>
    <property type="match status" value="1"/>
</dbReference>
<dbReference type="PROSITE" id="PS01127">
    <property type="entry name" value="EF_TS_2"/>
    <property type="match status" value="1"/>
</dbReference>
<accession>B2T5J3</accession>
<sequence length="293" mass="31063">MAAITASMVAELRAKTDAPMMECKKALTEADGDMARAEELLRVKLGNKASKAASRVTAEGVVASFIGGNAGSLVELNCETDFVSKNDDFLGFSKKVAELVATQNPADVAALAALPLDGSTVDAVRLALVGKIGENLSIRRFVRFETSNKLAAYLHGTRIGVLVEYTGADEQVGKDVAMHIAAMKPVSLSSDDVPADLIAKERSIAEQKAAESGKPAEIVAKMVEGSVQKYLKEVSLLNQTFVKNDKQTIEQMLKAGNSSVQKFALFVVGEGIEKKQDDFAAEVAAQVAAAKQQ</sequence>
<feature type="chain" id="PRO_1000116706" description="Elongation factor Ts">
    <location>
        <begin position="1"/>
        <end position="293"/>
    </location>
</feature>
<feature type="region of interest" description="Involved in Mg(2+) ion dislocation from EF-Tu" evidence="1">
    <location>
        <begin position="80"/>
        <end position="83"/>
    </location>
</feature>
<reference key="1">
    <citation type="journal article" date="2011" name="J. Bacteriol.">
        <title>Complete genome sequence of the plant growth-promoting endophyte Burkholderia phytofirmans strain PsJN.</title>
        <authorList>
            <person name="Weilharter A."/>
            <person name="Mitter B."/>
            <person name="Shin M.V."/>
            <person name="Chain P.S."/>
            <person name="Nowak J."/>
            <person name="Sessitsch A."/>
        </authorList>
    </citation>
    <scope>NUCLEOTIDE SEQUENCE [LARGE SCALE GENOMIC DNA]</scope>
    <source>
        <strain>DSM 17436 / LMG 22146 / PsJN</strain>
    </source>
</reference>
<comment type="function">
    <text evidence="1">Associates with the EF-Tu.GDP complex and induces the exchange of GDP to GTP. It remains bound to the aminoacyl-tRNA.EF-Tu.GTP complex up to the GTP hydrolysis stage on the ribosome.</text>
</comment>
<comment type="subcellular location">
    <subcellularLocation>
        <location evidence="1">Cytoplasm</location>
    </subcellularLocation>
</comment>
<comment type="similarity">
    <text evidence="1">Belongs to the EF-Ts family.</text>
</comment>
<proteinExistence type="inferred from homology"/>
<protein>
    <recommendedName>
        <fullName evidence="1">Elongation factor Ts</fullName>
        <shortName evidence="1">EF-Ts</shortName>
    </recommendedName>
</protein>
<keyword id="KW-0963">Cytoplasm</keyword>
<keyword id="KW-0251">Elongation factor</keyword>
<keyword id="KW-0648">Protein biosynthesis</keyword>
<evidence type="ECO:0000255" key="1">
    <source>
        <dbReference type="HAMAP-Rule" id="MF_00050"/>
    </source>
</evidence>
<gene>
    <name evidence="1" type="primary">tsf</name>
    <name type="ordered locus">Bphyt_2454</name>
</gene>